<protein>
    <recommendedName>
        <fullName evidence="2">Translation initiation factor IF-2</fullName>
    </recommendedName>
</protein>
<keyword id="KW-0963">Cytoplasm</keyword>
<keyword id="KW-0342">GTP-binding</keyword>
<keyword id="KW-0396">Initiation factor</keyword>
<keyword id="KW-0547">Nucleotide-binding</keyword>
<keyword id="KW-0648">Protein biosynthesis</keyword>
<keyword id="KW-1185">Reference proteome</keyword>
<reference key="1">
    <citation type="submission" date="2008-06" db="EMBL/GenBank/DDBJ databases">
        <title>Complete sequence of Pelodictyon phaeoclathratiforme BU-1.</title>
        <authorList>
            <consortium name="US DOE Joint Genome Institute"/>
            <person name="Lucas S."/>
            <person name="Copeland A."/>
            <person name="Lapidus A."/>
            <person name="Glavina del Rio T."/>
            <person name="Dalin E."/>
            <person name="Tice H."/>
            <person name="Bruce D."/>
            <person name="Goodwin L."/>
            <person name="Pitluck S."/>
            <person name="Schmutz J."/>
            <person name="Larimer F."/>
            <person name="Land M."/>
            <person name="Hauser L."/>
            <person name="Kyrpides N."/>
            <person name="Mikhailova N."/>
            <person name="Liu Z."/>
            <person name="Li T."/>
            <person name="Zhao F."/>
            <person name="Overmann J."/>
            <person name="Bryant D.A."/>
            <person name="Richardson P."/>
        </authorList>
    </citation>
    <scope>NUCLEOTIDE SEQUENCE [LARGE SCALE GENOMIC DNA]</scope>
    <source>
        <strain>DSM 5477 / BU-1</strain>
    </source>
</reference>
<accession>B4SCE7</accession>
<comment type="function">
    <text evidence="2">One of the essential components for the initiation of protein synthesis. Protects formylmethionyl-tRNA from spontaneous hydrolysis and promotes its binding to the 30S ribosomal subunits. Also involved in the hydrolysis of GTP during the formation of the 70S ribosomal complex.</text>
</comment>
<comment type="subcellular location">
    <subcellularLocation>
        <location evidence="2">Cytoplasm</location>
    </subcellularLocation>
</comment>
<comment type="similarity">
    <text evidence="2">Belongs to the TRAFAC class translation factor GTPase superfamily. Classic translation factor GTPase family. IF-2 subfamily.</text>
</comment>
<organism>
    <name type="scientific">Pelodictyon phaeoclathratiforme (strain DSM 5477 / BU-1)</name>
    <dbReference type="NCBI Taxonomy" id="324925"/>
    <lineage>
        <taxon>Bacteria</taxon>
        <taxon>Pseudomonadati</taxon>
        <taxon>Chlorobiota</taxon>
        <taxon>Chlorobiia</taxon>
        <taxon>Chlorobiales</taxon>
        <taxon>Chlorobiaceae</taxon>
        <taxon>Chlorobium/Pelodictyon group</taxon>
        <taxon>Pelodictyon</taxon>
    </lineage>
</organism>
<dbReference type="EMBL" id="CP001110">
    <property type="protein sequence ID" value="ACF42727.1"/>
    <property type="molecule type" value="Genomic_DNA"/>
</dbReference>
<dbReference type="RefSeq" id="WP_012507222.1">
    <property type="nucleotide sequence ID" value="NC_011060.1"/>
</dbReference>
<dbReference type="SMR" id="B4SCE7"/>
<dbReference type="STRING" id="324925.Ppha_0398"/>
<dbReference type="KEGG" id="pph:Ppha_0398"/>
<dbReference type="eggNOG" id="COG0532">
    <property type="taxonomic scope" value="Bacteria"/>
</dbReference>
<dbReference type="eggNOG" id="COG3170">
    <property type="taxonomic scope" value="Bacteria"/>
</dbReference>
<dbReference type="HOGENOM" id="CLU_006301_0_1_10"/>
<dbReference type="OrthoDB" id="9811804at2"/>
<dbReference type="Proteomes" id="UP000002724">
    <property type="component" value="Chromosome"/>
</dbReference>
<dbReference type="GO" id="GO:0005737">
    <property type="term" value="C:cytoplasm"/>
    <property type="evidence" value="ECO:0007669"/>
    <property type="project" value="UniProtKB-SubCell"/>
</dbReference>
<dbReference type="GO" id="GO:0005525">
    <property type="term" value="F:GTP binding"/>
    <property type="evidence" value="ECO:0007669"/>
    <property type="project" value="UniProtKB-KW"/>
</dbReference>
<dbReference type="GO" id="GO:0003924">
    <property type="term" value="F:GTPase activity"/>
    <property type="evidence" value="ECO:0007669"/>
    <property type="project" value="UniProtKB-UniRule"/>
</dbReference>
<dbReference type="GO" id="GO:0003743">
    <property type="term" value="F:translation initiation factor activity"/>
    <property type="evidence" value="ECO:0007669"/>
    <property type="project" value="UniProtKB-UniRule"/>
</dbReference>
<dbReference type="CDD" id="cd01887">
    <property type="entry name" value="IF2_eIF5B"/>
    <property type="match status" value="1"/>
</dbReference>
<dbReference type="CDD" id="cd03702">
    <property type="entry name" value="IF2_mtIF2_II"/>
    <property type="match status" value="1"/>
</dbReference>
<dbReference type="CDD" id="cd03692">
    <property type="entry name" value="mtIF2_IVc"/>
    <property type="match status" value="1"/>
</dbReference>
<dbReference type="FunFam" id="2.40.30.10:FF:000008">
    <property type="entry name" value="Translation initiation factor IF-2"/>
    <property type="match status" value="1"/>
</dbReference>
<dbReference type="FunFam" id="2.40.30.10:FF:000054">
    <property type="entry name" value="Translation initiation factor IF-2"/>
    <property type="match status" value="1"/>
</dbReference>
<dbReference type="FunFam" id="3.40.50.10050:FF:000001">
    <property type="entry name" value="Translation initiation factor IF-2"/>
    <property type="match status" value="1"/>
</dbReference>
<dbReference type="FunFam" id="3.40.50.300:FF:000019">
    <property type="entry name" value="Translation initiation factor IF-2"/>
    <property type="match status" value="1"/>
</dbReference>
<dbReference type="Gene3D" id="1.10.10.2480">
    <property type="match status" value="1"/>
</dbReference>
<dbReference type="Gene3D" id="3.40.50.300">
    <property type="entry name" value="P-loop containing nucleotide triphosphate hydrolases"/>
    <property type="match status" value="1"/>
</dbReference>
<dbReference type="Gene3D" id="2.40.30.10">
    <property type="entry name" value="Translation factors"/>
    <property type="match status" value="2"/>
</dbReference>
<dbReference type="Gene3D" id="3.40.50.10050">
    <property type="entry name" value="Translation initiation factor IF- 2, domain 3"/>
    <property type="match status" value="1"/>
</dbReference>
<dbReference type="HAMAP" id="MF_00100_B">
    <property type="entry name" value="IF_2_B"/>
    <property type="match status" value="1"/>
</dbReference>
<dbReference type="InterPro" id="IPR053905">
    <property type="entry name" value="EF-G-like_DII"/>
</dbReference>
<dbReference type="InterPro" id="IPR044145">
    <property type="entry name" value="IF2_II"/>
</dbReference>
<dbReference type="InterPro" id="IPR006847">
    <property type="entry name" value="IF2_N"/>
</dbReference>
<dbReference type="InterPro" id="IPR027417">
    <property type="entry name" value="P-loop_NTPase"/>
</dbReference>
<dbReference type="InterPro" id="IPR005225">
    <property type="entry name" value="Small_GTP-bd"/>
</dbReference>
<dbReference type="InterPro" id="IPR000795">
    <property type="entry name" value="T_Tr_GTP-bd_dom"/>
</dbReference>
<dbReference type="InterPro" id="IPR000178">
    <property type="entry name" value="TF_IF2_bacterial-like"/>
</dbReference>
<dbReference type="InterPro" id="IPR015760">
    <property type="entry name" value="TIF_IF2"/>
</dbReference>
<dbReference type="InterPro" id="IPR023115">
    <property type="entry name" value="TIF_IF2_dom3"/>
</dbReference>
<dbReference type="InterPro" id="IPR036925">
    <property type="entry name" value="TIF_IF2_dom3_sf"/>
</dbReference>
<dbReference type="InterPro" id="IPR009000">
    <property type="entry name" value="Transl_B-barrel_sf"/>
</dbReference>
<dbReference type="NCBIfam" id="TIGR00487">
    <property type="entry name" value="IF-2"/>
    <property type="match status" value="1"/>
</dbReference>
<dbReference type="NCBIfam" id="TIGR00231">
    <property type="entry name" value="small_GTP"/>
    <property type="match status" value="1"/>
</dbReference>
<dbReference type="PANTHER" id="PTHR43381:SF5">
    <property type="entry name" value="TR-TYPE G DOMAIN-CONTAINING PROTEIN"/>
    <property type="match status" value="1"/>
</dbReference>
<dbReference type="PANTHER" id="PTHR43381">
    <property type="entry name" value="TRANSLATION INITIATION FACTOR IF-2-RELATED"/>
    <property type="match status" value="1"/>
</dbReference>
<dbReference type="Pfam" id="PF22042">
    <property type="entry name" value="EF-G_D2"/>
    <property type="match status" value="1"/>
</dbReference>
<dbReference type="Pfam" id="PF00009">
    <property type="entry name" value="GTP_EFTU"/>
    <property type="match status" value="1"/>
</dbReference>
<dbReference type="Pfam" id="PF11987">
    <property type="entry name" value="IF-2"/>
    <property type="match status" value="1"/>
</dbReference>
<dbReference type="Pfam" id="PF04760">
    <property type="entry name" value="IF2_N"/>
    <property type="match status" value="1"/>
</dbReference>
<dbReference type="SUPFAM" id="SSF52156">
    <property type="entry name" value="Initiation factor IF2/eIF5b, domain 3"/>
    <property type="match status" value="1"/>
</dbReference>
<dbReference type="SUPFAM" id="SSF52540">
    <property type="entry name" value="P-loop containing nucleoside triphosphate hydrolases"/>
    <property type="match status" value="1"/>
</dbReference>
<dbReference type="SUPFAM" id="SSF50447">
    <property type="entry name" value="Translation proteins"/>
    <property type="match status" value="2"/>
</dbReference>
<dbReference type="PROSITE" id="PS51722">
    <property type="entry name" value="G_TR_2"/>
    <property type="match status" value="1"/>
</dbReference>
<dbReference type="PROSITE" id="PS01176">
    <property type="entry name" value="IF2"/>
    <property type="match status" value="1"/>
</dbReference>
<name>IF2_PELPB</name>
<evidence type="ECO:0000250" key="1"/>
<evidence type="ECO:0000255" key="2">
    <source>
        <dbReference type="HAMAP-Rule" id="MF_00100"/>
    </source>
</evidence>
<evidence type="ECO:0000256" key="3">
    <source>
        <dbReference type="SAM" id="MobiDB-lite"/>
    </source>
</evidence>
<sequence>MALEDMEKKYRISDIARELQVSPQEVLLFVKQEGGRVASTSSMVGEEIHGLIFGHFSVEKKMVDETKKIRAEKEKRLSRLEEQSRKTYEKEQHLSETLSPPAPPLVVVHEPKKEVIVAAPIENIPEPPSKPLEIPVAETPASEEPDAPPAVTELIEQPVVIEQQPLAPVSDAPVPPVIIELPVPSEVPESQVLPESRVLPESQVLSESPLLPEPPVLSEPQEQQELPELPELPEIPALPEPAPKKEEPSVNEHLVSFDAPQMMGGLTVLGTLDMQAGRHKKNRKKNFQEQADALKDEFEPKPAEESRVEEKVVVAKKPPVKAAADVKPKPVVADSSSSAKKKGKKKKKPAVDDKVISANIQKTISGIDDRSSTGSRQKFRKMRRNEREREHEEDEAFREAQRLVVRVTEYASPHELAELMGITAKDIIQKCFALGKFVTINQRLDKESIELIALEFGFEAEFISEVEATAVIVTEDAEADMQTRPPVVTIMGHVDHGKTSLLDYIRNSKVVAGESGGITQHIGAYEVTVEGDRKITFLDTPGHEAFTAMRARGAQVTDIVILVVAADDSVMPQTIEAINHAKAAGVPIVVALNKIDKVEANPEKIKTQLSEAGVLVEEWGGVYQCQEISAKKGIGIAELMEKVLTEAEMRELRGNYSREVPASGIIVESELDKGKGVISTVLVQRGILKVGDPFVAGNTMGKVRALMDERGKRIPFANPSQPVRVLGFEDLPQSGDALTVMVTDREARDLAQKRQVIRREHDFRRSTRVKLDSIARQIKEGLMKELSVIIKADTDGSIQALADGLMKIQNEEVKVQIIHQGVGQITETDVLLAAASDAIIIGFRVRPNVNAKKLAEKEDLDVRFYSVIYHVLEDVEKALEGMLSPELHEESLGSLEIRQIFKVPKIGNVGGCYMLEGKMFRDSKVRLLRDGVQIYEGQLAALKRFKDDVKEVDAGYECGMSLKNYDDIKVGDIVEAYKIVEKKRKL</sequence>
<gene>
    <name evidence="2" type="primary">infB</name>
    <name type="ordered locus">Ppha_0398</name>
</gene>
<feature type="chain" id="PRO_1000117334" description="Translation initiation factor IF-2">
    <location>
        <begin position="1"/>
        <end position="986"/>
    </location>
</feature>
<feature type="domain" description="tr-type G">
    <location>
        <begin position="483"/>
        <end position="653"/>
    </location>
</feature>
<feature type="region of interest" description="Disordered" evidence="3">
    <location>
        <begin position="75"/>
        <end position="105"/>
    </location>
</feature>
<feature type="region of interest" description="Disordered" evidence="3">
    <location>
        <begin position="127"/>
        <end position="148"/>
    </location>
</feature>
<feature type="region of interest" description="Disordered" evidence="3">
    <location>
        <begin position="185"/>
        <end position="258"/>
    </location>
</feature>
<feature type="region of interest" description="Disordered" evidence="3">
    <location>
        <begin position="277"/>
        <end position="394"/>
    </location>
</feature>
<feature type="region of interest" description="G1" evidence="1">
    <location>
        <begin position="492"/>
        <end position="499"/>
    </location>
</feature>
<feature type="region of interest" description="G2" evidence="1">
    <location>
        <begin position="517"/>
        <end position="521"/>
    </location>
</feature>
<feature type="region of interest" description="G3" evidence="1">
    <location>
        <begin position="539"/>
        <end position="542"/>
    </location>
</feature>
<feature type="region of interest" description="G4" evidence="1">
    <location>
        <begin position="593"/>
        <end position="596"/>
    </location>
</feature>
<feature type="region of interest" description="G5" evidence="1">
    <location>
        <begin position="629"/>
        <end position="631"/>
    </location>
</feature>
<feature type="compositionally biased region" description="Basic and acidic residues" evidence="3">
    <location>
        <begin position="75"/>
        <end position="94"/>
    </location>
</feature>
<feature type="compositionally biased region" description="Low complexity" evidence="3">
    <location>
        <begin position="185"/>
        <end position="210"/>
    </location>
</feature>
<feature type="compositionally biased region" description="Low complexity" evidence="3">
    <location>
        <begin position="218"/>
        <end position="235"/>
    </location>
</feature>
<feature type="compositionally biased region" description="Basic and acidic residues" evidence="3">
    <location>
        <begin position="292"/>
        <end position="313"/>
    </location>
</feature>
<feature type="compositionally biased region" description="Low complexity" evidence="3">
    <location>
        <begin position="315"/>
        <end position="338"/>
    </location>
</feature>
<feature type="compositionally biased region" description="Basic residues" evidence="3">
    <location>
        <begin position="339"/>
        <end position="348"/>
    </location>
</feature>
<feature type="binding site" evidence="2">
    <location>
        <begin position="492"/>
        <end position="499"/>
    </location>
    <ligand>
        <name>GTP</name>
        <dbReference type="ChEBI" id="CHEBI:37565"/>
    </ligand>
</feature>
<feature type="binding site" evidence="2">
    <location>
        <begin position="539"/>
        <end position="543"/>
    </location>
    <ligand>
        <name>GTP</name>
        <dbReference type="ChEBI" id="CHEBI:37565"/>
    </ligand>
</feature>
<feature type="binding site" evidence="2">
    <location>
        <begin position="593"/>
        <end position="596"/>
    </location>
    <ligand>
        <name>GTP</name>
        <dbReference type="ChEBI" id="CHEBI:37565"/>
    </ligand>
</feature>
<proteinExistence type="inferred from homology"/>